<keyword id="KW-0167">Capsid protein</keyword>
<keyword id="KW-0688">Ribosomal frameshifting</keyword>
<keyword id="KW-0946">Virion</keyword>
<sequence length="433" mass="45353">MANIQGGQQIGTNQGKGQSAADKLALFLKVFGGEVLTAFARTSVTMPRHMLRSIASGKSAQFPVIGRTKAAYLKPGENLDDKRKDIKHTEKVIHIDGLLTADVLIYDIEDAMNHYDVRAEYTAQLGESLAMAADGAVLAELAGLVNLPDGSNENIEGLGKPTVLTLVKPTTGSLTDPVELGKAIIAQLTIARASLTKNYVPAADRTFYTTPDNYSAILAALMPNAANYQALLDPERGTIRNVMGFEVVEVPHLTAGGAGDTREDAPADQKHAFPATSSTTVKVALDNVVGLFQHRSAVGTVKLKDLALERARRANYQADQIIAKYAMGHGGLRPEAAGAIVLPKGVGVIPDPTGVTLSQKTMTLVEGASRALTGTVQPSDANQSLSWSSSAEDVAVWEAGKVVAKGVGTADITATTSNGLIASCKVIVNAATS</sequence>
<accession>P19728</accession>
<comment type="function">
    <text evidence="1">Assembles with the major capsid protein to form an icosahedral capsid with a T=7 symmetry, about 60 nm in diameter, and consisting of 415 capsid proteins. The major and minor capsid proteins are incorporated into the capsid in about a 90/10 ratio respectively. Once the capsid is formed, encapsidates one single copy of the viral genome.</text>
</comment>
<comment type="subunit">
    <text evidence="3">Interacts with the connector protein and the major capsid protein.</text>
</comment>
<comment type="subcellular location">
    <subcellularLocation>
        <location evidence="3">Virion</location>
    </subcellularLocation>
</comment>
<comment type="alternative products">
    <event type="ribosomal frameshifting"/>
    <isoform>
        <id>P19728-1</id>
        <name>Minor capsid protein 10B</name>
        <sequence type="displayed"/>
    </isoform>
    <isoform>
        <id>P19693-1</id>
        <name>Major capsid protein 10A</name>
        <sequence type="external"/>
    </isoform>
</comment>
<comment type="miscellaneous">
    <text evidence="3">The minor capsid protein is produced by a -1 ribosomal frameshift near the C-terminus of the ORF coding for the major capsid protein, producing a protein with a C-terminal extension compared to the major capsid protein. The major capsid protein is produced by conventional translation of the same ORF.</text>
</comment>
<comment type="miscellaneous">
    <molecule>Isoform Minor capsid protein 10B</molecule>
    <text evidence="4">Produced by -1 ribosomal frameshifting.</text>
</comment>
<comment type="similarity">
    <text evidence="3">Belongs to the T7virus minor capsid protein family.</text>
</comment>
<organismHost>
    <name type="scientific">Escherichia coli</name>
    <dbReference type="NCBI Taxonomy" id="562"/>
</organismHost>
<proteinExistence type="inferred from homology"/>
<reference key="1">
    <citation type="journal article" date="1989" name="J. Mol. Biol.">
        <title>Nucleotide sequence and complementation studies of the gene 10 region of bacteriophage T3.</title>
        <authorList>
            <person name="Condreay J.P."/>
            <person name="Wright S.E."/>
            <person name="Molineux I.J."/>
        </authorList>
    </citation>
    <scope>NUCLEOTIDE SEQUENCE [GENOMIC DNA]</scope>
    <source>
        <strain>Luria</strain>
    </source>
</reference>
<protein>
    <recommendedName>
        <fullName evidence="3">Minor capsid protein</fullName>
    </recommendedName>
    <alternativeName>
        <fullName>Gene product 10B</fullName>
        <shortName>Gp10B</shortName>
    </alternativeName>
    <alternativeName>
        <fullName evidence="3">Minor head protein</fullName>
    </alternativeName>
</protein>
<name>CAPSB_BPT3</name>
<gene>
    <name type="primary">10</name>
</gene>
<evidence type="ECO:0000250" key="1">
    <source>
        <dbReference type="UniProtKB" id="P19727"/>
    </source>
</evidence>
<evidence type="ECO:0000255" key="2"/>
<evidence type="ECO:0000255" key="3">
    <source>
        <dbReference type="HAMAP-Rule" id="MF_04119"/>
    </source>
</evidence>
<evidence type="ECO:0000269" key="4">
    <source>
    </source>
</evidence>
<dbReference type="EMBL" id="X17255">
    <property type="protein sequence ID" value="CAA35155.1"/>
    <property type="molecule type" value="Genomic_DNA"/>
</dbReference>
<dbReference type="EMBL" id="X15840">
    <property type="status" value="NOT_ANNOTATED_CDS"/>
    <property type="molecule type" value="Genomic_DNA"/>
</dbReference>
<dbReference type="PIR" id="A33079">
    <property type="entry name" value="VBBPA3"/>
</dbReference>
<dbReference type="PIR" id="S04665">
    <property type="entry name" value="S04665"/>
</dbReference>
<dbReference type="RefSeq" id="NP_523334.1">
    <molecule id="P19728-1"/>
    <property type="nucleotide sequence ID" value="NC_003298.1"/>
</dbReference>
<dbReference type="SMR" id="P19728"/>
<dbReference type="KEGG" id="vg:927449"/>
<dbReference type="OrthoDB" id="4979at10239"/>
<dbReference type="GO" id="GO:0019028">
    <property type="term" value="C:viral capsid"/>
    <property type="evidence" value="ECO:0007669"/>
    <property type="project" value="UniProtKB-UniRule"/>
</dbReference>
<dbReference type="GO" id="GO:0075523">
    <property type="term" value="P:viral translational frameshifting"/>
    <property type="evidence" value="ECO:0007669"/>
    <property type="project" value="UniProtKB-KW"/>
</dbReference>
<dbReference type="Gene3D" id="2.60.40.1080">
    <property type="match status" value="1"/>
</dbReference>
<dbReference type="HAMAP" id="MF_04119">
    <property type="entry name" value="CAPSID_PROTEIN_T7"/>
    <property type="match status" value="1"/>
</dbReference>
<dbReference type="InterPro" id="IPR003343">
    <property type="entry name" value="Big_2"/>
</dbReference>
<dbReference type="InterPro" id="IPR049301">
    <property type="entry name" value="Capsid_Gp10A/Gp10B-like_dom"/>
</dbReference>
<dbReference type="InterPro" id="IPR039009">
    <property type="entry name" value="Capsid_Gp10A/Gp10B_dom"/>
</dbReference>
<dbReference type="InterPro" id="IPR008964">
    <property type="entry name" value="Invasin/intimin_cell_adhesion"/>
</dbReference>
<dbReference type="Pfam" id="PF02368">
    <property type="entry name" value="Big_2"/>
    <property type="match status" value="1"/>
</dbReference>
<dbReference type="Pfam" id="PF21703">
    <property type="entry name" value="Gp10A-like"/>
    <property type="match status" value="1"/>
</dbReference>
<dbReference type="SMART" id="SM00635">
    <property type="entry name" value="BID_2"/>
    <property type="match status" value="1"/>
</dbReference>
<dbReference type="SUPFAM" id="SSF49373">
    <property type="entry name" value="Invasin/intimin cell-adhesion fragments"/>
    <property type="match status" value="1"/>
</dbReference>
<organism>
    <name type="scientific">Enterobacteria phage T3</name>
    <name type="common">Bacteriophage T3</name>
    <dbReference type="NCBI Taxonomy" id="10759"/>
    <lineage>
        <taxon>Viruses</taxon>
        <taxon>Duplodnaviria</taxon>
        <taxon>Heunggongvirae</taxon>
        <taxon>Uroviricota</taxon>
        <taxon>Caudoviricetes</taxon>
        <taxon>Autographiviridae</taxon>
        <taxon>Studiervirinae</taxon>
        <taxon>Teetrevirus</taxon>
        <taxon>Teetrevirus T3</taxon>
    </lineage>
</organism>
<feature type="chain" id="PRO_0000106521" description="Minor capsid protein">
    <location>
        <begin position="1"/>
        <end position="433"/>
    </location>
</feature>
<feature type="domain" description="BIG2" evidence="2">
    <location>
        <begin position="353"/>
        <end position="419"/>
    </location>
</feature>